<accession>O13284</accession>
<name>CPSKS_PHASA</name>
<evidence type="ECO:0000250" key="1">
    <source>
        <dbReference type="UniProtKB" id="Q40577"/>
    </source>
</evidence>
<evidence type="ECO:0000305" key="2"/>
<feature type="chain" id="PRO_0000186445" description="Ent-kaur-16-ene synthase">
    <location>
        <begin position="1"/>
        <end position="946"/>
    </location>
</feature>
<feature type="short sequence motif" description="DEXXE motif" evidence="2">
    <location>
        <begin position="656"/>
        <end position="660"/>
    </location>
</feature>
<feature type="binding site" evidence="1">
    <location>
        <position position="656"/>
    </location>
    <ligand>
        <name>Mg(2+)</name>
        <dbReference type="ChEBI" id="CHEBI:18420"/>
        <label>1</label>
    </ligand>
</feature>
<feature type="binding site" evidence="1">
    <location>
        <position position="656"/>
    </location>
    <ligand>
        <name>Mg(2+)</name>
        <dbReference type="ChEBI" id="CHEBI:18420"/>
        <label>2</label>
    </ligand>
</feature>
<feature type="binding site" evidence="1">
    <location>
        <position position="660"/>
    </location>
    <ligand>
        <name>Mg(2+)</name>
        <dbReference type="ChEBI" id="CHEBI:18420"/>
        <label>1</label>
    </ligand>
</feature>
<feature type="binding site" evidence="1">
    <location>
        <position position="660"/>
    </location>
    <ligand>
        <name>Mg(2+)</name>
        <dbReference type="ChEBI" id="CHEBI:18420"/>
        <label>2</label>
    </ligand>
</feature>
<feature type="binding site" evidence="1">
    <location>
        <position position="839"/>
    </location>
    <ligand>
        <name>Mg(2+)</name>
        <dbReference type="ChEBI" id="CHEBI:18420"/>
        <label>3</label>
    </ligand>
</feature>
<feature type="binding site" evidence="1">
    <location>
        <position position="840"/>
    </location>
    <ligand>
        <name>Mg(2+)</name>
        <dbReference type="ChEBI" id="CHEBI:18420"/>
        <label>3</label>
    </ligand>
</feature>
<feature type="binding site" evidence="1">
    <location>
        <position position="843"/>
    </location>
    <ligand>
        <name>Mg(2+)</name>
        <dbReference type="ChEBI" id="CHEBI:18420"/>
        <label>3</label>
    </ligand>
</feature>
<feature type="binding site" evidence="1">
    <location>
        <position position="847"/>
    </location>
    <ligand>
        <name>Mg(2+)</name>
        <dbReference type="ChEBI" id="CHEBI:18420"/>
        <label>3</label>
    </ligand>
</feature>
<keyword id="KW-0413">Isomerase</keyword>
<keyword id="KW-0456">Lyase</keyword>
<keyword id="KW-0460">Magnesium</keyword>
<keyword id="KW-0479">Metal-binding</keyword>
<dbReference type="EC" id="4.2.3.19"/>
<dbReference type="EC" id="5.5.1.13"/>
<dbReference type="EMBL" id="AB003395">
    <property type="protein sequence ID" value="BAA22426.1"/>
    <property type="molecule type" value="mRNA"/>
</dbReference>
<dbReference type="PIR" id="T00024">
    <property type="entry name" value="T00024"/>
</dbReference>
<dbReference type="SMR" id="O13284"/>
<dbReference type="KEGG" id="ag:BAA22426"/>
<dbReference type="BioCyc" id="MetaCyc:MONOMER-15993"/>
<dbReference type="BRENDA" id="4.2.3.19">
    <property type="organism ID" value="4709"/>
</dbReference>
<dbReference type="BRENDA" id="5.5.1.13">
    <property type="organism ID" value="4709"/>
</dbReference>
<dbReference type="UniPathway" id="UPA00390"/>
<dbReference type="GO" id="GO:0009905">
    <property type="term" value="F:ent-copalyl diphosphate synthase activity"/>
    <property type="evidence" value="ECO:0007669"/>
    <property type="project" value="UniProtKB-EC"/>
</dbReference>
<dbReference type="GO" id="GO:0009899">
    <property type="term" value="F:ent-kaurene synthase activity"/>
    <property type="evidence" value="ECO:0007669"/>
    <property type="project" value="UniProtKB-EC"/>
</dbReference>
<dbReference type="GO" id="GO:0000287">
    <property type="term" value="F:magnesium ion binding"/>
    <property type="evidence" value="ECO:0007669"/>
    <property type="project" value="TreeGrafter"/>
</dbReference>
<dbReference type="GO" id="GO:0009686">
    <property type="term" value="P:gibberellin biosynthetic process"/>
    <property type="evidence" value="ECO:0007669"/>
    <property type="project" value="UniProtKB-UniPathway"/>
</dbReference>
<dbReference type="Gene3D" id="1.50.10.160">
    <property type="match status" value="1"/>
</dbReference>
<dbReference type="Gene3D" id="1.50.10.20">
    <property type="match status" value="1"/>
</dbReference>
<dbReference type="Gene3D" id="1.10.600.10">
    <property type="entry name" value="Farnesyl Diphosphate Synthase"/>
    <property type="match status" value="1"/>
</dbReference>
<dbReference type="InterPro" id="IPR017057">
    <property type="entry name" value="Ent-kaurene_synthase_fun"/>
</dbReference>
<dbReference type="InterPro" id="IPR008949">
    <property type="entry name" value="Isoprenoid_synthase_dom_sf"/>
</dbReference>
<dbReference type="InterPro" id="IPR050148">
    <property type="entry name" value="Terpene_synthase-like"/>
</dbReference>
<dbReference type="InterPro" id="IPR008930">
    <property type="entry name" value="Terpenoid_cyclase/PrenylTrfase"/>
</dbReference>
<dbReference type="PANTHER" id="PTHR31739:SF25">
    <property type="entry name" value="(E,E)-GERANYLLINALOOL SYNTHASE"/>
    <property type="match status" value="1"/>
</dbReference>
<dbReference type="PANTHER" id="PTHR31739">
    <property type="entry name" value="ENT-COPALYL DIPHOSPHATE SYNTHASE, CHLOROPLASTIC"/>
    <property type="match status" value="1"/>
</dbReference>
<dbReference type="PIRSF" id="PIRSF036498">
    <property type="entry name" value="Ent-kaurene_synthase_fungi"/>
    <property type="match status" value="1"/>
</dbReference>
<dbReference type="SUPFAM" id="SSF48239">
    <property type="entry name" value="Terpenoid cyclases/Protein prenyltransferases"/>
    <property type="match status" value="2"/>
</dbReference>
<organism>
    <name type="scientific">Phaeosphaeria sp. (strain L487)</name>
    <dbReference type="NCBI Taxonomy" id="65784"/>
    <lineage>
        <taxon>Eukaryota</taxon>
        <taxon>Fungi</taxon>
        <taxon>Dikarya</taxon>
        <taxon>Ascomycota</taxon>
        <taxon>Pezizomycotina</taxon>
        <taxon>Dothideomycetes</taxon>
        <taxon>Pleosporomycetidae</taxon>
        <taxon>Pleosporales</taxon>
        <taxon>Pleosporineae</taxon>
        <taxon>Phaeosphaeriaceae</taxon>
        <taxon>Phaeosphaeria</taxon>
    </lineage>
</organism>
<comment type="function">
    <text>Catalyzes the conversion of geranylgeranyl diphosphate to the gibberellin precursor ent-kaurene diphosphate in a two step process.</text>
</comment>
<comment type="catalytic activity">
    <reaction>
        <text>ent-copalyl diphosphate = ent-kaur-16-ene + diphosphate</text>
        <dbReference type="Rhea" id="RHEA:22220"/>
        <dbReference type="ChEBI" id="CHEBI:15415"/>
        <dbReference type="ChEBI" id="CHEBI:33019"/>
        <dbReference type="ChEBI" id="CHEBI:58553"/>
        <dbReference type="EC" id="4.2.3.19"/>
    </reaction>
</comment>
<comment type="catalytic activity">
    <reaction>
        <text>(2E,6E,10E)-geranylgeranyl diphosphate = ent-copalyl diphosphate</text>
        <dbReference type="Rhea" id="RHEA:14841"/>
        <dbReference type="ChEBI" id="CHEBI:58553"/>
        <dbReference type="ChEBI" id="CHEBI:58756"/>
        <dbReference type="EC" id="5.5.1.13"/>
    </reaction>
</comment>
<comment type="cofactor">
    <cofactor evidence="1">
        <name>Mg(2+)</name>
        <dbReference type="ChEBI" id="CHEBI:18420"/>
    </cofactor>
</comment>
<comment type="pathway">
    <text>Plant hormone biosynthesis; gibberellin biosynthesis.</text>
</comment>
<comment type="domain">
    <text>The Asp-Asp-Xaa-Xaa-Asp/Glu (DDXXD/E) motif is important for the catalytic activity, presumably through binding to Mg(2+).</text>
</comment>
<comment type="similarity">
    <text evidence="2">Belongs to the terpene synthase family.</text>
</comment>
<protein>
    <recommendedName>
        <fullName>Ent-kaur-16-ene synthase</fullName>
        <ecNumber>4.2.3.19</ecNumber>
        <ecNumber>5.5.1.13</ecNumber>
    </recommendedName>
    <alternativeName>
        <fullName>CPS/KS</fullName>
    </alternativeName>
    <alternativeName>
        <fullName>Ent-copalyl diphosphate synthase</fullName>
    </alternativeName>
    <alternativeName>
        <fullName>Ent-kaurene synthase</fullName>
    </alternativeName>
    <alternativeName>
        <fullName>FCPS/KS</fullName>
    </alternativeName>
</protein>
<reference key="1">
    <citation type="journal article" date="1997" name="J. Biol. Chem.">
        <title>Ent-kaurene synthase from the fungus Phaeosphaeria sp. L487. cDNA isolation, characterization, and bacterial expression of a bifunctional diterpene cyclase in fungal gibberellin biosynthesis.</title>
        <authorList>
            <person name="Kawaide H."/>
            <person name="Imai R."/>
            <person name="Sassa T."/>
            <person name="Kamiya Y."/>
        </authorList>
    </citation>
    <scope>NUCLEOTIDE SEQUENCE [MRNA]</scope>
</reference>
<sequence length="946" mass="105724">MFAKFDMLEEEARALVRKVGNAVDPIYGFSTTSCQIYDTAWAAMISKEEHGDKVWLFPESFKYLLEKQGEDGSWERHPRSKTVGVLNTAAACLALLRHVKNPLQLQDIAAQDIELRIQRGLRSLEEQLIAWDDVLDTNHIGVEMIVPALLDYLQAEDENVDFEFESHSLLMQMYKEKMARFSPESLYRARPSSALHNLEALIGKLDFDKVGHHLYNGSMMASPSSTAAFLMHASPWSHEAEAYLRHVFEAGTGKGSGGFPGTYPTTYFELNWVLSTLMKSGFTLSDLECDELSSIANTIAEGFECDHGVIGFAPRAVDVDDTAKGLLTLTLLGMDEGVSPAPMIAMFEAKDHFLTFLGERDPSFTSNCHVLLSLLHRTDLLQYLPQIRKTTTFLCEAWWACDGQIKDKWHLSHLYPTMLMVQAFAEILLKSAEGEPLHDAFDAATLSRVSICVFQACLRTLLAQSQDGSWHGQPEASCYAVLTLAESGRLVLLQALQPQIAAAMEKAADVMQAGRWSCSDHDCDWTSKTAYRVDLVAAAYRLAAMKASSNLTFTVDDNVSKRSNGFQQLVGRTDLFSGVPAWELQASFLESALFVPLLRNHRLDVFDRDDIKVSKDHYLDMIPFTWVGCNNRSRTYVSTSFLFDMMIISMLGYQIDEFFEAEAAPAFAQCIGQLHQVVDKVVDEVIDEVVDKVVGKVVGKVVGKVVDERVDSPTHEAIAICNIEASLRRFVDHVLHHQHVLHASQQEQDILWRELRAFLHAHVVQMADNSTLAPPGRTFFDWVRTTAADHVACAYSFAFACCITSATIGQGQSMFATVNELYLVQAAARHMTTMCRMCNDIGSVDRDFIEANINSVHFPEFSTLSLVADKKKALARLAAYEKSCLTHTLDQFENEVLQSPRVSSAASGDFRTRKVAVVRFFADVTDFYDQLYILRDLSSSLKHVGT</sequence>
<proteinExistence type="evidence at transcript level"/>